<sequence length="428" mass="48640">MLDIRLFRNEPDTVKSKIELRGDDPKVVDEILELDEQRRKLISATEEMKARRNKVSEEIALKKRNKENADDVIAEMRTLGDDIKEKDSQLNEIDNKMTGILCRIPNLISDDVPQGESDEDNVEVKKWGTPREFSFEPKAHWDIVEELKMADFDRAAKVSGARFVYLTNEGAQLERALMNYMITKHTTQHGYTEMMVPQLVNADTMYGTGQLPKFEEDLFKVEKEGLYTIPTAEVPLTNFYRNEIIQPGVLPEKFTGQSACFRSEAGSAGRDTRGLIRLHQFDKVEMVRFEQPEDSWNALEEMTTNAEAILEELGLPYRRVILCTGDIGFSASKTYDIEVWLPSYNDYKEISSCSNCTDFQARRANIRFKRDKAAKPELAHTLNGSGLAVGRTFAAIVENYQNEDGTVTIPEALVPFMGGKTQISKPVK</sequence>
<proteinExistence type="inferred from homology"/>
<comment type="function">
    <text evidence="1">Catalyzes the attachment of serine to tRNA(Ser). Is also able to aminoacylate tRNA(Sec) with serine, to form the misacylated tRNA L-seryl-tRNA(Sec), which will be further converted into selenocysteinyl-tRNA(Sec).</text>
</comment>
<comment type="catalytic activity">
    <reaction evidence="1">
        <text>tRNA(Ser) + L-serine + ATP = L-seryl-tRNA(Ser) + AMP + diphosphate + H(+)</text>
        <dbReference type="Rhea" id="RHEA:12292"/>
        <dbReference type="Rhea" id="RHEA-COMP:9669"/>
        <dbReference type="Rhea" id="RHEA-COMP:9703"/>
        <dbReference type="ChEBI" id="CHEBI:15378"/>
        <dbReference type="ChEBI" id="CHEBI:30616"/>
        <dbReference type="ChEBI" id="CHEBI:33019"/>
        <dbReference type="ChEBI" id="CHEBI:33384"/>
        <dbReference type="ChEBI" id="CHEBI:78442"/>
        <dbReference type="ChEBI" id="CHEBI:78533"/>
        <dbReference type="ChEBI" id="CHEBI:456215"/>
        <dbReference type="EC" id="6.1.1.11"/>
    </reaction>
</comment>
<comment type="catalytic activity">
    <reaction evidence="1">
        <text>tRNA(Sec) + L-serine + ATP = L-seryl-tRNA(Sec) + AMP + diphosphate + H(+)</text>
        <dbReference type="Rhea" id="RHEA:42580"/>
        <dbReference type="Rhea" id="RHEA-COMP:9742"/>
        <dbReference type="Rhea" id="RHEA-COMP:10128"/>
        <dbReference type="ChEBI" id="CHEBI:15378"/>
        <dbReference type="ChEBI" id="CHEBI:30616"/>
        <dbReference type="ChEBI" id="CHEBI:33019"/>
        <dbReference type="ChEBI" id="CHEBI:33384"/>
        <dbReference type="ChEBI" id="CHEBI:78442"/>
        <dbReference type="ChEBI" id="CHEBI:78533"/>
        <dbReference type="ChEBI" id="CHEBI:456215"/>
        <dbReference type="EC" id="6.1.1.11"/>
    </reaction>
</comment>
<comment type="pathway">
    <text evidence="1">Aminoacyl-tRNA biosynthesis; selenocysteinyl-tRNA(Sec) biosynthesis; L-seryl-tRNA(Sec) from L-serine and tRNA(Sec): step 1/1.</text>
</comment>
<comment type="subunit">
    <text evidence="1">Homodimer. The tRNA molecule binds across the dimer.</text>
</comment>
<comment type="subcellular location">
    <subcellularLocation>
        <location evidence="1">Cytoplasm</location>
    </subcellularLocation>
</comment>
<comment type="domain">
    <text evidence="1">Consists of two distinct domains, a catalytic core and a N-terminal extension that is involved in tRNA binding.</text>
</comment>
<comment type="similarity">
    <text evidence="1">Belongs to the class-II aminoacyl-tRNA synthetase family. Type-1 seryl-tRNA synthetase subfamily.</text>
</comment>
<gene>
    <name evidence="1" type="primary">serS</name>
    <name type="ordered locus">SAV0009</name>
</gene>
<organism>
    <name type="scientific">Staphylococcus aureus (strain Mu50 / ATCC 700699)</name>
    <dbReference type="NCBI Taxonomy" id="158878"/>
    <lineage>
        <taxon>Bacteria</taxon>
        <taxon>Bacillati</taxon>
        <taxon>Bacillota</taxon>
        <taxon>Bacilli</taxon>
        <taxon>Bacillales</taxon>
        <taxon>Staphylococcaceae</taxon>
        <taxon>Staphylococcus</taxon>
    </lineage>
</organism>
<feature type="chain" id="PRO_0000122119" description="Serine--tRNA ligase">
    <location>
        <begin position="1"/>
        <end position="428"/>
    </location>
</feature>
<feature type="binding site" evidence="1">
    <location>
        <begin position="231"/>
        <end position="233"/>
    </location>
    <ligand>
        <name>L-serine</name>
        <dbReference type="ChEBI" id="CHEBI:33384"/>
    </ligand>
</feature>
<feature type="binding site" evidence="1">
    <location>
        <begin position="262"/>
        <end position="264"/>
    </location>
    <ligand>
        <name>ATP</name>
        <dbReference type="ChEBI" id="CHEBI:30616"/>
    </ligand>
</feature>
<feature type="binding site" evidence="1">
    <location>
        <position position="285"/>
    </location>
    <ligand>
        <name>L-serine</name>
        <dbReference type="ChEBI" id="CHEBI:33384"/>
    </ligand>
</feature>
<feature type="binding site" evidence="1">
    <location>
        <begin position="349"/>
        <end position="352"/>
    </location>
    <ligand>
        <name>ATP</name>
        <dbReference type="ChEBI" id="CHEBI:30616"/>
    </ligand>
</feature>
<feature type="binding site" evidence="1">
    <location>
        <position position="385"/>
    </location>
    <ligand>
        <name>L-serine</name>
        <dbReference type="ChEBI" id="CHEBI:33384"/>
    </ligand>
</feature>
<reference key="1">
    <citation type="journal article" date="2001" name="Lancet">
        <title>Whole genome sequencing of meticillin-resistant Staphylococcus aureus.</title>
        <authorList>
            <person name="Kuroda M."/>
            <person name="Ohta T."/>
            <person name="Uchiyama I."/>
            <person name="Baba T."/>
            <person name="Yuzawa H."/>
            <person name="Kobayashi I."/>
            <person name="Cui L."/>
            <person name="Oguchi A."/>
            <person name="Aoki K."/>
            <person name="Nagai Y."/>
            <person name="Lian J.-Q."/>
            <person name="Ito T."/>
            <person name="Kanamori M."/>
            <person name="Matsumaru H."/>
            <person name="Maruyama A."/>
            <person name="Murakami H."/>
            <person name="Hosoyama A."/>
            <person name="Mizutani-Ui Y."/>
            <person name="Takahashi N.K."/>
            <person name="Sawano T."/>
            <person name="Inoue R."/>
            <person name="Kaito C."/>
            <person name="Sekimizu K."/>
            <person name="Hirakawa H."/>
            <person name="Kuhara S."/>
            <person name="Goto S."/>
            <person name="Yabuzaki J."/>
            <person name="Kanehisa M."/>
            <person name="Yamashita A."/>
            <person name="Oshima K."/>
            <person name="Furuya K."/>
            <person name="Yoshino C."/>
            <person name="Shiba T."/>
            <person name="Hattori M."/>
            <person name="Ogasawara N."/>
            <person name="Hayashi H."/>
            <person name="Hiramatsu K."/>
        </authorList>
    </citation>
    <scope>NUCLEOTIDE SEQUENCE [LARGE SCALE GENOMIC DNA]</scope>
    <source>
        <strain>Mu50 / ATCC 700699</strain>
    </source>
</reference>
<keyword id="KW-0030">Aminoacyl-tRNA synthetase</keyword>
<keyword id="KW-0067">ATP-binding</keyword>
<keyword id="KW-0963">Cytoplasm</keyword>
<keyword id="KW-0436">Ligase</keyword>
<keyword id="KW-0547">Nucleotide-binding</keyword>
<keyword id="KW-0648">Protein biosynthesis</keyword>
<name>SYS_STAAM</name>
<accession>P61083</accession>
<accession>Q99XG2</accession>
<evidence type="ECO:0000255" key="1">
    <source>
        <dbReference type="HAMAP-Rule" id="MF_00176"/>
    </source>
</evidence>
<protein>
    <recommendedName>
        <fullName evidence="1">Serine--tRNA ligase</fullName>
        <ecNumber evidence="1">6.1.1.11</ecNumber>
    </recommendedName>
    <alternativeName>
        <fullName evidence="1">Seryl-tRNA synthetase</fullName>
        <shortName evidence="1">SerRS</shortName>
    </alternativeName>
    <alternativeName>
        <fullName evidence="1">Seryl-tRNA(Ser/Sec) synthetase</fullName>
    </alternativeName>
</protein>
<dbReference type="EC" id="6.1.1.11" evidence="1"/>
<dbReference type="EMBL" id="BA000017">
    <property type="protein sequence ID" value="BAB56171.1"/>
    <property type="molecule type" value="Genomic_DNA"/>
</dbReference>
<dbReference type="RefSeq" id="WP_000884332.1">
    <property type="nucleotide sequence ID" value="NC_002758.2"/>
</dbReference>
<dbReference type="SMR" id="P61083"/>
<dbReference type="KEGG" id="sav:SAV0009"/>
<dbReference type="HOGENOM" id="CLU_023797_1_1_9"/>
<dbReference type="PhylomeDB" id="P61083"/>
<dbReference type="UniPathway" id="UPA00906">
    <property type="reaction ID" value="UER00895"/>
</dbReference>
<dbReference type="Proteomes" id="UP000002481">
    <property type="component" value="Chromosome"/>
</dbReference>
<dbReference type="GO" id="GO:0005737">
    <property type="term" value="C:cytoplasm"/>
    <property type="evidence" value="ECO:0007669"/>
    <property type="project" value="UniProtKB-SubCell"/>
</dbReference>
<dbReference type="GO" id="GO:0005524">
    <property type="term" value="F:ATP binding"/>
    <property type="evidence" value="ECO:0007669"/>
    <property type="project" value="UniProtKB-UniRule"/>
</dbReference>
<dbReference type="GO" id="GO:0140096">
    <property type="term" value="F:catalytic activity, acting on a protein"/>
    <property type="evidence" value="ECO:0007669"/>
    <property type="project" value="UniProtKB-ARBA"/>
</dbReference>
<dbReference type="GO" id="GO:0004828">
    <property type="term" value="F:serine-tRNA ligase activity"/>
    <property type="evidence" value="ECO:0007669"/>
    <property type="project" value="UniProtKB-UniRule"/>
</dbReference>
<dbReference type="GO" id="GO:0016740">
    <property type="term" value="F:transferase activity"/>
    <property type="evidence" value="ECO:0007669"/>
    <property type="project" value="UniProtKB-ARBA"/>
</dbReference>
<dbReference type="GO" id="GO:0016260">
    <property type="term" value="P:selenocysteine biosynthetic process"/>
    <property type="evidence" value="ECO:0007669"/>
    <property type="project" value="UniProtKB-UniRule"/>
</dbReference>
<dbReference type="GO" id="GO:0006434">
    <property type="term" value="P:seryl-tRNA aminoacylation"/>
    <property type="evidence" value="ECO:0007669"/>
    <property type="project" value="UniProtKB-UniRule"/>
</dbReference>
<dbReference type="CDD" id="cd00770">
    <property type="entry name" value="SerRS_core"/>
    <property type="match status" value="1"/>
</dbReference>
<dbReference type="Gene3D" id="3.30.930.10">
    <property type="entry name" value="Bira Bifunctional Protein, Domain 2"/>
    <property type="match status" value="1"/>
</dbReference>
<dbReference type="Gene3D" id="1.10.287.40">
    <property type="entry name" value="Serine-tRNA synthetase, tRNA binding domain"/>
    <property type="match status" value="1"/>
</dbReference>
<dbReference type="HAMAP" id="MF_00176">
    <property type="entry name" value="Ser_tRNA_synth_type1"/>
    <property type="match status" value="1"/>
</dbReference>
<dbReference type="InterPro" id="IPR002314">
    <property type="entry name" value="aa-tRNA-synt_IIb"/>
</dbReference>
<dbReference type="InterPro" id="IPR006195">
    <property type="entry name" value="aa-tRNA-synth_II"/>
</dbReference>
<dbReference type="InterPro" id="IPR045864">
    <property type="entry name" value="aa-tRNA-synth_II/BPL/LPL"/>
</dbReference>
<dbReference type="InterPro" id="IPR002317">
    <property type="entry name" value="Ser-tRNA-ligase_type_1"/>
</dbReference>
<dbReference type="InterPro" id="IPR015866">
    <property type="entry name" value="Ser-tRNA-synth_1_N"/>
</dbReference>
<dbReference type="InterPro" id="IPR042103">
    <property type="entry name" value="SerRS_1_N_sf"/>
</dbReference>
<dbReference type="InterPro" id="IPR033729">
    <property type="entry name" value="SerRS_core"/>
</dbReference>
<dbReference type="InterPro" id="IPR010978">
    <property type="entry name" value="tRNA-bd_arm"/>
</dbReference>
<dbReference type="NCBIfam" id="TIGR00414">
    <property type="entry name" value="serS"/>
    <property type="match status" value="1"/>
</dbReference>
<dbReference type="PANTHER" id="PTHR43697:SF1">
    <property type="entry name" value="SERINE--TRNA LIGASE"/>
    <property type="match status" value="1"/>
</dbReference>
<dbReference type="PANTHER" id="PTHR43697">
    <property type="entry name" value="SERYL-TRNA SYNTHETASE"/>
    <property type="match status" value="1"/>
</dbReference>
<dbReference type="Pfam" id="PF02403">
    <property type="entry name" value="Seryl_tRNA_N"/>
    <property type="match status" value="1"/>
</dbReference>
<dbReference type="Pfam" id="PF00587">
    <property type="entry name" value="tRNA-synt_2b"/>
    <property type="match status" value="1"/>
</dbReference>
<dbReference type="PIRSF" id="PIRSF001529">
    <property type="entry name" value="Ser-tRNA-synth_IIa"/>
    <property type="match status" value="1"/>
</dbReference>
<dbReference type="PRINTS" id="PR00981">
    <property type="entry name" value="TRNASYNTHSER"/>
</dbReference>
<dbReference type="SUPFAM" id="SSF55681">
    <property type="entry name" value="Class II aaRS and biotin synthetases"/>
    <property type="match status" value="1"/>
</dbReference>
<dbReference type="SUPFAM" id="SSF46589">
    <property type="entry name" value="tRNA-binding arm"/>
    <property type="match status" value="1"/>
</dbReference>
<dbReference type="PROSITE" id="PS50862">
    <property type="entry name" value="AA_TRNA_LIGASE_II"/>
    <property type="match status" value="1"/>
</dbReference>